<accession>Q8LB02</accession>
<accession>Q9FM32</accession>
<accession>Q9G3L9</accession>
<sequence length="280" mass="31141">MAFGLIGRVVGTKSSRLSTAARLIPARWTSTGSEAQSKASTGGGGASLKTFQIYRWNPDNPGKPELQDYKIDLKDCGPMVLDALIKIKNEMDPSLTFRRSCREGICGSCAMNIDGCNGLACLTKIESGSKETTITPLPHMFVIKDLVVDMTNFYNQYKSIEPWLKRKNPASVPGKEILQSKKDRAKLDGMYECILCACCSTSCPSYWWNPESYLGPAALLHANRWISDSRDEYTKERLEAIDDEFKLYRCHTILNCARACPKGLNPGKQITHIKQLQKSG</sequence>
<comment type="function">
    <text evidence="1">Iron-sulfur protein (IP) subunit of succinate dehydrogenase (SDH) that is involved in complex II of the mitochondrial electron transport chain and is responsible for transferring electrons from succinate to ubiquinone (coenzyme Q).</text>
</comment>
<comment type="catalytic activity">
    <reaction>
        <text>a quinone + succinate = fumarate + a quinol</text>
        <dbReference type="Rhea" id="RHEA:40523"/>
        <dbReference type="ChEBI" id="CHEBI:24646"/>
        <dbReference type="ChEBI" id="CHEBI:29806"/>
        <dbReference type="ChEBI" id="CHEBI:30031"/>
        <dbReference type="ChEBI" id="CHEBI:132124"/>
        <dbReference type="EC" id="1.3.5.1"/>
    </reaction>
</comment>
<comment type="cofactor">
    <cofactor evidence="2">
        <name>[2Fe-2S] cluster</name>
        <dbReference type="ChEBI" id="CHEBI:190135"/>
    </cofactor>
    <text evidence="2">Binds 1 [2Fe-2S] cluster.</text>
</comment>
<comment type="cofactor">
    <cofactor evidence="2">
        <name>[3Fe-4S] cluster</name>
        <dbReference type="ChEBI" id="CHEBI:21137"/>
    </cofactor>
    <text evidence="2">Binds 1 [3Fe-4S] cluster.</text>
</comment>
<comment type="cofactor">
    <cofactor evidence="2">
        <name>[4Fe-4S] cluster</name>
        <dbReference type="ChEBI" id="CHEBI:49883"/>
    </cofactor>
    <text evidence="2">Binds 1 [4Fe-4S] cluster.</text>
</comment>
<comment type="pathway">
    <text evidence="10">Carbohydrate metabolism; tricarboxylic acid cycle; fumarate from succinate (eukaryal route): step 1/1.</text>
</comment>
<comment type="subunit">
    <text evidence="9">Component of complex II composed of eight subunits in plants: four classical SDH subunits SDH1, SDH2, SDH3 and SDH4 (a flavoprotein (FP), an iron-sulfur protein (IP), and a cytochrome b composed of a large and a small subunit.), as well as four subunits unknown in mitochondria from bacteria and heterotrophic eukaryotes.</text>
</comment>
<comment type="subcellular location">
    <subcellularLocation>
        <location evidence="7">Mitochondrion inner membrane</location>
        <topology evidence="7">Peripheral membrane protein</topology>
        <orientation evidence="7">Matrix side</orientation>
    </subcellularLocation>
</comment>
<comment type="tissue specificity">
    <text evidence="6 8">Ubiquitous. Preferentially expressed in flowers, inflorescences and root tips.</text>
</comment>
<comment type="developmental stage">
    <text evidence="8">Expressed in floral meristems and sex organ primordia at early stages of development. Later expressed in anthers, particularly in the tapetum, pollen mother cells, and microspores.</text>
</comment>
<comment type="similarity">
    <text evidence="10">Belongs to the succinate dehydrogenase/fumarate reductase iron-sulfur protein family.</text>
</comment>
<dbReference type="EC" id="1.3.5.1"/>
<dbReference type="EMBL" id="AJ278911">
    <property type="protein sequence ID" value="CAC19856.1"/>
    <property type="molecule type" value="mRNA"/>
</dbReference>
<dbReference type="EMBL" id="AB009052">
    <property type="protein sequence ID" value="BAB08537.1"/>
    <property type="molecule type" value="Genomic_DNA"/>
</dbReference>
<dbReference type="EMBL" id="CP002688">
    <property type="protein sequence ID" value="AED94578.1"/>
    <property type="molecule type" value="Genomic_DNA"/>
</dbReference>
<dbReference type="EMBL" id="AY074299">
    <property type="protein sequence ID" value="AAL66996.1"/>
    <property type="molecule type" value="mRNA"/>
</dbReference>
<dbReference type="EMBL" id="AY123036">
    <property type="protein sequence ID" value="AAM67569.1"/>
    <property type="molecule type" value="mRNA"/>
</dbReference>
<dbReference type="EMBL" id="AY087504">
    <property type="protein sequence ID" value="AAM65047.1"/>
    <property type="molecule type" value="mRNA"/>
</dbReference>
<dbReference type="RefSeq" id="NP_198881.1">
    <property type="nucleotide sequence ID" value="NM_123430.2"/>
</dbReference>
<dbReference type="SMR" id="Q8LB02"/>
<dbReference type="BioGRID" id="19316">
    <property type="interactions" value="7"/>
</dbReference>
<dbReference type="FunCoup" id="Q8LB02">
    <property type="interactions" value="3369"/>
</dbReference>
<dbReference type="IntAct" id="Q8LB02">
    <property type="interactions" value="1"/>
</dbReference>
<dbReference type="STRING" id="3702.Q8LB02"/>
<dbReference type="SwissPalm" id="Q8LB02"/>
<dbReference type="PaxDb" id="3702-AT5G40650.1"/>
<dbReference type="ProteomicsDB" id="232888"/>
<dbReference type="EnsemblPlants" id="AT5G40650.1">
    <property type="protein sequence ID" value="AT5G40650.1"/>
    <property type="gene ID" value="AT5G40650"/>
</dbReference>
<dbReference type="GeneID" id="834065"/>
<dbReference type="Gramene" id="AT5G40650.1">
    <property type="protein sequence ID" value="AT5G40650.1"/>
    <property type="gene ID" value="AT5G40650"/>
</dbReference>
<dbReference type="KEGG" id="ath:AT5G40650"/>
<dbReference type="Araport" id="AT5G40650"/>
<dbReference type="TAIR" id="AT5G40650">
    <property type="gene designation" value="SDH2-2"/>
</dbReference>
<dbReference type="eggNOG" id="KOG3049">
    <property type="taxonomic scope" value="Eukaryota"/>
</dbReference>
<dbReference type="HOGENOM" id="CLU_044838_0_2_1"/>
<dbReference type="InParanoid" id="Q8LB02"/>
<dbReference type="OMA" id="DGQYFGP"/>
<dbReference type="OrthoDB" id="1696654at2759"/>
<dbReference type="PhylomeDB" id="Q8LB02"/>
<dbReference type="BioCyc" id="ARA:AT5G40650-MONOMER"/>
<dbReference type="BioCyc" id="MetaCyc:AT5G40650-MONOMER"/>
<dbReference type="BRENDA" id="1.3.5.1">
    <property type="organism ID" value="399"/>
</dbReference>
<dbReference type="UniPathway" id="UPA00223">
    <property type="reaction ID" value="UER01006"/>
</dbReference>
<dbReference type="CD-CODE" id="4299E36E">
    <property type="entry name" value="Nucleolus"/>
</dbReference>
<dbReference type="PRO" id="PR:Q8LB02"/>
<dbReference type="Proteomes" id="UP000006548">
    <property type="component" value="Chromosome 5"/>
</dbReference>
<dbReference type="ExpressionAtlas" id="Q8LB02">
    <property type="expression patterns" value="baseline and differential"/>
</dbReference>
<dbReference type="GO" id="GO:0005743">
    <property type="term" value="C:mitochondrial inner membrane"/>
    <property type="evidence" value="ECO:0007669"/>
    <property type="project" value="UniProtKB-SubCell"/>
</dbReference>
<dbReference type="GO" id="GO:0005739">
    <property type="term" value="C:mitochondrion"/>
    <property type="evidence" value="ECO:0000314"/>
    <property type="project" value="TAIR"/>
</dbReference>
<dbReference type="GO" id="GO:0009536">
    <property type="term" value="C:plastid"/>
    <property type="evidence" value="ECO:0007005"/>
    <property type="project" value="TAIR"/>
</dbReference>
<dbReference type="GO" id="GO:0045273">
    <property type="term" value="C:respiratory chain complex II (succinate dehydrogenase)"/>
    <property type="evidence" value="ECO:0000314"/>
    <property type="project" value="UniProtKB"/>
</dbReference>
<dbReference type="GO" id="GO:0051537">
    <property type="term" value="F:2 iron, 2 sulfur cluster binding"/>
    <property type="evidence" value="ECO:0007669"/>
    <property type="project" value="UniProtKB-KW"/>
</dbReference>
<dbReference type="GO" id="GO:0051538">
    <property type="term" value="F:3 iron, 4 sulfur cluster binding"/>
    <property type="evidence" value="ECO:0007669"/>
    <property type="project" value="UniProtKB-KW"/>
</dbReference>
<dbReference type="GO" id="GO:0051539">
    <property type="term" value="F:4 iron, 4 sulfur cluster binding"/>
    <property type="evidence" value="ECO:0007669"/>
    <property type="project" value="UniProtKB-KW"/>
</dbReference>
<dbReference type="GO" id="GO:0009055">
    <property type="term" value="F:electron transfer activity"/>
    <property type="evidence" value="ECO:0000250"/>
    <property type="project" value="TAIR"/>
</dbReference>
<dbReference type="GO" id="GO:0008177">
    <property type="term" value="F:succinate dehydrogenase (quinone) activity"/>
    <property type="evidence" value="ECO:0007669"/>
    <property type="project" value="UniProtKB-EC"/>
</dbReference>
<dbReference type="GO" id="GO:0000104">
    <property type="term" value="F:succinate dehydrogenase activity"/>
    <property type="evidence" value="ECO:0000250"/>
    <property type="project" value="TAIR"/>
</dbReference>
<dbReference type="GO" id="GO:0008270">
    <property type="term" value="F:zinc ion binding"/>
    <property type="evidence" value="ECO:0007005"/>
    <property type="project" value="TAIR"/>
</dbReference>
<dbReference type="GO" id="GO:0006121">
    <property type="term" value="P:mitochondrial electron transport, succinate to ubiquinone"/>
    <property type="evidence" value="ECO:0000250"/>
    <property type="project" value="TAIR"/>
</dbReference>
<dbReference type="GO" id="GO:0006099">
    <property type="term" value="P:tricarboxylic acid cycle"/>
    <property type="evidence" value="ECO:0007669"/>
    <property type="project" value="UniProtKB-UniPathway"/>
</dbReference>
<dbReference type="FunFam" id="3.10.20.30:FF:000007">
    <property type="entry name" value="Succinate dehydrogenase [ubiquinone] iron-sulfur subunit, mitochondrial"/>
    <property type="match status" value="1"/>
</dbReference>
<dbReference type="FunFam" id="1.10.1060.10:FF:000001">
    <property type="entry name" value="Succinate dehydrogenase iron-sulfur subunit SdhB"/>
    <property type="match status" value="1"/>
</dbReference>
<dbReference type="Gene3D" id="3.10.20.30">
    <property type="match status" value="1"/>
</dbReference>
<dbReference type="Gene3D" id="1.10.1060.10">
    <property type="entry name" value="Alpha-helical ferredoxin"/>
    <property type="match status" value="1"/>
</dbReference>
<dbReference type="InterPro" id="IPR036010">
    <property type="entry name" value="2Fe-2S_ferredoxin-like_sf"/>
</dbReference>
<dbReference type="InterPro" id="IPR001041">
    <property type="entry name" value="2Fe-2S_ferredoxin-type"/>
</dbReference>
<dbReference type="InterPro" id="IPR006058">
    <property type="entry name" value="2Fe2S_fd_BS"/>
</dbReference>
<dbReference type="InterPro" id="IPR017896">
    <property type="entry name" value="4Fe4S_Fe-S-bd"/>
</dbReference>
<dbReference type="InterPro" id="IPR017900">
    <property type="entry name" value="4Fe4S_Fe_S_CS"/>
</dbReference>
<dbReference type="InterPro" id="IPR012675">
    <property type="entry name" value="Beta-grasp_dom_sf"/>
</dbReference>
<dbReference type="InterPro" id="IPR009051">
    <property type="entry name" value="Helical_ferredxn"/>
</dbReference>
<dbReference type="InterPro" id="IPR050573">
    <property type="entry name" value="SDH/FRD_Iron-Sulfur"/>
</dbReference>
<dbReference type="InterPro" id="IPR004489">
    <property type="entry name" value="Succ_DH/fum_Rdtase_Fe-S"/>
</dbReference>
<dbReference type="InterPro" id="IPR025192">
    <property type="entry name" value="Succ_DH/fum_Rdtase_N"/>
</dbReference>
<dbReference type="NCBIfam" id="TIGR00384">
    <property type="entry name" value="dhsB"/>
    <property type="match status" value="1"/>
</dbReference>
<dbReference type="NCBIfam" id="NF004616">
    <property type="entry name" value="PRK05950.1"/>
    <property type="match status" value="1"/>
</dbReference>
<dbReference type="PANTHER" id="PTHR11921:SF29">
    <property type="entry name" value="SUCCINATE DEHYDROGENASE [UBIQUINONE] IRON-SULFUR SUBUNIT, MITOCHONDRIAL"/>
    <property type="match status" value="1"/>
</dbReference>
<dbReference type="PANTHER" id="PTHR11921">
    <property type="entry name" value="SUCCINATE DEHYDROGENASE IRON-SULFUR PROTEIN"/>
    <property type="match status" value="1"/>
</dbReference>
<dbReference type="Pfam" id="PF13085">
    <property type="entry name" value="Fer2_3"/>
    <property type="match status" value="1"/>
</dbReference>
<dbReference type="Pfam" id="PF13534">
    <property type="entry name" value="Fer4_17"/>
    <property type="match status" value="1"/>
</dbReference>
<dbReference type="SUPFAM" id="SSF54292">
    <property type="entry name" value="2Fe-2S ferredoxin-like"/>
    <property type="match status" value="1"/>
</dbReference>
<dbReference type="SUPFAM" id="SSF46548">
    <property type="entry name" value="alpha-helical ferredoxin"/>
    <property type="match status" value="1"/>
</dbReference>
<dbReference type="PROSITE" id="PS00197">
    <property type="entry name" value="2FE2S_FER_1"/>
    <property type="match status" value="1"/>
</dbReference>
<dbReference type="PROSITE" id="PS51085">
    <property type="entry name" value="2FE2S_FER_2"/>
    <property type="match status" value="1"/>
</dbReference>
<dbReference type="PROSITE" id="PS00198">
    <property type="entry name" value="4FE4S_FER_1"/>
    <property type="match status" value="1"/>
</dbReference>
<dbReference type="PROSITE" id="PS51379">
    <property type="entry name" value="4FE4S_FER_2"/>
    <property type="match status" value="1"/>
</dbReference>
<feature type="transit peptide" description="Mitochondrion" evidence="3">
    <location>
        <begin position="1"/>
        <end position="28"/>
    </location>
</feature>
<feature type="chain" id="PRO_0000247596" description="Succinate dehydrogenase [ubiquinone] iron-sulfur subunit 2, mitochondrial">
    <location>
        <begin position="29"/>
        <end position="280"/>
    </location>
</feature>
<feature type="domain" description="2Fe-2S ferredoxin-type" evidence="4">
    <location>
        <begin position="51"/>
        <end position="140"/>
    </location>
</feature>
<feature type="domain" description="4Fe-4S ferredoxin-type" evidence="5">
    <location>
        <begin position="183"/>
        <end position="213"/>
    </location>
</feature>
<feature type="binding site" evidence="2">
    <location>
        <position position="101"/>
    </location>
    <ligand>
        <name>[2Fe-2S] cluster</name>
        <dbReference type="ChEBI" id="CHEBI:190135"/>
    </ligand>
</feature>
<feature type="binding site" evidence="2">
    <location>
        <position position="106"/>
    </location>
    <ligand>
        <name>[2Fe-2S] cluster</name>
        <dbReference type="ChEBI" id="CHEBI:190135"/>
    </ligand>
</feature>
<feature type="binding site" evidence="2">
    <location>
        <position position="121"/>
    </location>
    <ligand>
        <name>[2Fe-2S] cluster</name>
        <dbReference type="ChEBI" id="CHEBI:190135"/>
    </ligand>
</feature>
<feature type="binding site" evidence="2">
    <location>
        <position position="193"/>
    </location>
    <ligand>
        <name>[4Fe-4S] cluster</name>
        <dbReference type="ChEBI" id="CHEBI:49883"/>
    </ligand>
</feature>
<feature type="binding site" evidence="2">
    <location>
        <position position="196"/>
    </location>
    <ligand>
        <name>[4Fe-4S] cluster</name>
        <dbReference type="ChEBI" id="CHEBI:49883"/>
    </ligand>
</feature>
<feature type="binding site" evidence="2">
    <location>
        <position position="199"/>
    </location>
    <ligand>
        <name>[4Fe-4S] cluster</name>
        <dbReference type="ChEBI" id="CHEBI:49883"/>
    </ligand>
</feature>
<feature type="binding site" evidence="2">
    <location>
        <position position="203"/>
    </location>
    <ligand>
        <name>[3Fe-4S] cluster</name>
        <dbReference type="ChEBI" id="CHEBI:21137"/>
    </ligand>
</feature>
<feature type="binding site" evidence="2">
    <location>
        <position position="208"/>
    </location>
    <ligand>
        <name>a ubiquinone</name>
        <dbReference type="ChEBI" id="CHEBI:16389"/>
        <note>ligand shared with SdhD subunit</note>
    </ligand>
</feature>
<feature type="binding site" evidence="2">
    <location>
        <position position="250"/>
    </location>
    <ligand>
        <name>[3Fe-4S] cluster</name>
        <dbReference type="ChEBI" id="CHEBI:21137"/>
    </ligand>
</feature>
<feature type="binding site" evidence="2">
    <location>
        <position position="256"/>
    </location>
    <ligand>
        <name>[3Fe-4S] cluster</name>
        <dbReference type="ChEBI" id="CHEBI:21137"/>
    </ligand>
</feature>
<feature type="binding site" evidence="2">
    <location>
        <position position="260"/>
    </location>
    <ligand>
        <name>[4Fe-4S] cluster</name>
        <dbReference type="ChEBI" id="CHEBI:49883"/>
    </ligand>
</feature>
<feature type="sequence conflict" description="In Ref. 1; CAC19856 and 5; AAM65047." evidence="10" ref="1 5">
    <original>S</original>
    <variation>P</variation>
    <location>
        <position position="14"/>
    </location>
</feature>
<feature type="sequence conflict" description="In Ref. 1; CAC19856 and 5; AAM65047." evidence="10" ref="1 5">
    <original>T</original>
    <variation>K</variation>
    <location>
        <position position="31"/>
    </location>
</feature>
<feature type="sequence conflict" description="In Ref. 1; CAC19856." evidence="10" ref="1">
    <original>S</original>
    <variation>F</variation>
    <location>
        <position position="127"/>
    </location>
</feature>
<protein>
    <recommendedName>
        <fullName>Succinate dehydrogenase [ubiquinone] iron-sulfur subunit 2, mitochondrial</fullName>
        <ecNumber>1.3.5.1</ecNumber>
    </recommendedName>
    <alternativeName>
        <fullName>Iron-sulfur subunit of complex II</fullName>
        <shortName>Ip</shortName>
    </alternativeName>
</protein>
<evidence type="ECO:0000250" key="1"/>
<evidence type="ECO:0000250" key="2">
    <source>
        <dbReference type="UniProtKB" id="P07014"/>
    </source>
</evidence>
<evidence type="ECO:0000255" key="3"/>
<evidence type="ECO:0000255" key="4">
    <source>
        <dbReference type="PROSITE-ProRule" id="PRU00465"/>
    </source>
</evidence>
<evidence type="ECO:0000255" key="5">
    <source>
        <dbReference type="PROSITE-ProRule" id="PRU00711"/>
    </source>
</evidence>
<evidence type="ECO:0000269" key="6">
    <source>
    </source>
</evidence>
<evidence type="ECO:0000269" key="7">
    <source>
    </source>
</evidence>
<evidence type="ECO:0000269" key="8">
    <source>
    </source>
</evidence>
<evidence type="ECO:0000269" key="9">
    <source>
    </source>
</evidence>
<evidence type="ECO:0000305" key="10"/>
<proteinExistence type="evidence at protein level"/>
<name>SDHB2_ARATH</name>
<keyword id="KW-0001">2Fe-2S</keyword>
<keyword id="KW-0003">3Fe-4S</keyword>
<keyword id="KW-0004">4Fe-4S</keyword>
<keyword id="KW-0249">Electron transport</keyword>
<keyword id="KW-0408">Iron</keyword>
<keyword id="KW-0411">Iron-sulfur</keyword>
<keyword id="KW-0472">Membrane</keyword>
<keyword id="KW-0479">Metal-binding</keyword>
<keyword id="KW-0496">Mitochondrion</keyword>
<keyword id="KW-0999">Mitochondrion inner membrane</keyword>
<keyword id="KW-0560">Oxidoreductase</keyword>
<keyword id="KW-1185">Reference proteome</keyword>
<keyword id="KW-0809">Transit peptide</keyword>
<keyword id="KW-0813">Transport</keyword>
<keyword id="KW-0816">Tricarboxylic acid cycle</keyword>
<reference key="1">
    <citation type="journal article" date="2001" name="Plant Mol. Biol.">
        <title>Three different genes encode the iron-sulphur subunit of succinate dehydrogenase in Arabidopsis thaliana.</title>
        <authorList>
            <person name="Figueroa P."/>
            <person name="Leon G."/>
            <person name="Elorza A."/>
            <person name="Holuigue L."/>
            <person name="Jordana X."/>
        </authorList>
    </citation>
    <scope>NUCLEOTIDE SEQUENCE [MRNA]</scope>
    <scope>TISSUE SPECIFICITY</scope>
    <source>
        <strain>cv. Columbia</strain>
    </source>
</reference>
<reference key="2">
    <citation type="journal article" date="1998" name="DNA Res.">
        <title>Structural analysis of Arabidopsis thaliana chromosome 5. IV. Sequence features of the regions of 1,456,315 bp covered by nineteen physically assigned P1 and TAC clones.</title>
        <authorList>
            <person name="Sato S."/>
            <person name="Kaneko T."/>
            <person name="Kotani H."/>
            <person name="Nakamura Y."/>
            <person name="Asamizu E."/>
            <person name="Miyajima N."/>
            <person name="Tabata S."/>
        </authorList>
    </citation>
    <scope>NUCLEOTIDE SEQUENCE [LARGE SCALE GENOMIC DNA]</scope>
    <source>
        <strain>cv. Columbia</strain>
    </source>
</reference>
<reference key="3">
    <citation type="journal article" date="2017" name="Plant J.">
        <title>Araport11: a complete reannotation of the Arabidopsis thaliana reference genome.</title>
        <authorList>
            <person name="Cheng C.Y."/>
            <person name="Krishnakumar V."/>
            <person name="Chan A.P."/>
            <person name="Thibaud-Nissen F."/>
            <person name="Schobel S."/>
            <person name="Town C.D."/>
        </authorList>
    </citation>
    <scope>GENOME REANNOTATION</scope>
    <source>
        <strain>cv. Columbia</strain>
    </source>
</reference>
<reference key="4">
    <citation type="journal article" date="2003" name="Science">
        <title>Empirical analysis of transcriptional activity in the Arabidopsis genome.</title>
        <authorList>
            <person name="Yamada K."/>
            <person name="Lim J."/>
            <person name="Dale J.M."/>
            <person name="Chen H."/>
            <person name="Shinn P."/>
            <person name="Palm C.J."/>
            <person name="Southwick A.M."/>
            <person name="Wu H.C."/>
            <person name="Kim C.J."/>
            <person name="Nguyen M."/>
            <person name="Pham P.K."/>
            <person name="Cheuk R.F."/>
            <person name="Karlin-Newmann G."/>
            <person name="Liu S.X."/>
            <person name="Lam B."/>
            <person name="Sakano H."/>
            <person name="Wu T."/>
            <person name="Yu G."/>
            <person name="Miranda M."/>
            <person name="Quach H.L."/>
            <person name="Tripp M."/>
            <person name="Chang C.H."/>
            <person name="Lee J.M."/>
            <person name="Toriumi M.J."/>
            <person name="Chan M.M."/>
            <person name="Tang C.C."/>
            <person name="Onodera C.S."/>
            <person name="Deng J.M."/>
            <person name="Akiyama K."/>
            <person name="Ansari Y."/>
            <person name="Arakawa T."/>
            <person name="Banh J."/>
            <person name="Banno F."/>
            <person name="Bowser L."/>
            <person name="Brooks S.Y."/>
            <person name="Carninci P."/>
            <person name="Chao Q."/>
            <person name="Choy N."/>
            <person name="Enju A."/>
            <person name="Goldsmith A.D."/>
            <person name="Gurjal M."/>
            <person name="Hansen N.F."/>
            <person name="Hayashizaki Y."/>
            <person name="Johnson-Hopson C."/>
            <person name="Hsuan V.W."/>
            <person name="Iida K."/>
            <person name="Karnes M."/>
            <person name="Khan S."/>
            <person name="Koesema E."/>
            <person name="Ishida J."/>
            <person name="Jiang P.X."/>
            <person name="Jones T."/>
            <person name="Kawai J."/>
            <person name="Kamiya A."/>
            <person name="Meyers C."/>
            <person name="Nakajima M."/>
            <person name="Narusaka M."/>
            <person name="Seki M."/>
            <person name="Sakurai T."/>
            <person name="Satou M."/>
            <person name="Tamse R."/>
            <person name="Vaysberg M."/>
            <person name="Wallender E.K."/>
            <person name="Wong C."/>
            <person name="Yamamura Y."/>
            <person name="Yuan S."/>
            <person name="Shinozaki K."/>
            <person name="Davis R.W."/>
            <person name="Theologis A."/>
            <person name="Ecker J.R."/>
        </authorList>
    </citation>
    <scope>NUCLEOTIDE SEQUENCE [LARGE SCALE MRNA]</scope>
    <source>
        <strain>cv. Columbia</strain>
    </source>
</reference>
<reference key="5">
    <citation type="submission" date="2002-03" db="EMBL/GenBank/DDBJ databases">
        <title>Full-length cDNA from Arabidopsis thaliana.</title>
        <authorList>
            <person name="Brover V.V."/>
            <person name="Troukhan M.E."/>
            <person name="Alexandrov N.A."/>
            <person name="Lu Y.-P."/>
            <person name="Flavell R.B."/>
            <person name="Feldmann K.A."/>
        </authorList>
    </citation>
    <scope>NUCLEOTIDE SEQUENCE [LARGE SCALE MRNA]</scope>
</reference>
<reference key="6">
    <citation type="journal article" date="2004" name="Plant Cell">
        <title>Experimental analysis of the Arabidopsis mitochondrial proteome highlights signaling and regulatory components, provides assessment of targeting prediction programs, and indicates plant-specific mitochondrial proteins.</title>
        <authorList>
            <person name="Heazlewood J.L."/>
            <person name="Tonti-Filippini J.S."/>
            <person name="Gout A.M."/>
            <person name="Day D.A."/>
            <person name="Whelan J."/>
            <person name="Millar A.H."/>
        </authorList>
    </citation>
    <scope>IDENTIFICATION BY MASS SPECTROMETRY</scope>
    <scope>SUBCELLULAR LOCATION [LARGE SCALE ANALYSIS]</scope>
    <source>
        <strain>cv. Landsberg erecta</strain>
    </source>
</reference>
<reference key="7">
    <citation type="journal article" date="2003" name="Plant Physiol.">
        <title>New insights into the respiratory chain of plant mitochondria. Supercomplexes and a unique composition of complex II.</title>
        <authorList>
            <person name="Eubel H."/>
            <person name="Jansch L."/>
            <person name="Braun H.P."/>
        </authorList>
    </citation>
    <scope>IDENTIFICATION BY MASS SPECTROMETRY</scope>
</reference>
<reference key="8">
    <citation type="journal article" date="2004" name="Plant Mol. Biol.">
        <title>Mitochondrial cytochrome c oxidase and succinate dehydrogenase complexes contain plant specific subunits.</title>
        <authorList>
            <person name="Millar A.H."/>
            <person name="Eubel H."/>
            <person name="Jansch L."/>
            <person name="Kruft V."/>
            <person name="Heazlewood J.L."/>
            <person name="Braun H.P."/>
        </authorList>
    </citation>
    <scope>IDENTIFICATION BY MASS SPECTROMETRY</scope>
    <scope>SUBUNIT</scope>
</reference>
<reference key="9">
    <citation type="journal article" date="2004" name="Plant Physiol.">
        <title>Nuclear SDH2-1 and SDH2-2 genes, encoding the iron-sulfur subunit of mitochondrial complex II in Arabidopsis, have distinct cell-specific expression patterns and promoter activities.</title>
        <authorList>
            <person name="Elorza A."/>
            <person name="Leon G."/>
            <person name="Gomez I."/>
            <person name="Mouras A."/>
            <person name="Holuigue L."/>
            <person name="Araya A."/>
            <person name="Jordana X."/>
        </authorList>
    </citation>
    <scope>DEVELOPMENTAL STAGE</scope>
    <scope>TISSUE SPECIFICITY</scope>
</reference>
<gene>
    <name type="primary">SDH2-2</name>
    <name type="ordered locus">At5g40650</name>
    <name type="ORF">MNF13.170</name>
    <name type="ORF">MNF13.21</name>
</gene>
<organism>
    <name type="scientific">Arabidopsis thaliana</name>
    <name type="common">Mouse-ear cress</name>
    <dbReference type="NCBI Taxonomy" id="3702"/>
    <lineage>
        <taxon>Eukaryota</taxon>
        <taxon>Viridiplantae</taxon>
        <taxon>Streptophyta</taxon>
        <taxon>Embryophyta</taxon>
        <taxon>Tracheophyta</taxon>
        <taxon>Spermatophyta</taxon>
        <taxon>Magnoliopsida</taxon>
        <taxon>eudicotyledons</taxon>
        <taxon>Gunneridae</taxon>
        <taxon>Pentapetalae</taxon>
        <taxon>rosids</taxon>
        <taxon>malvids</taxon>
        <taxon>Brassicales</taxon>
        <taxon>Brassicaceae</taxon>
        <taxon>Camelineae</taxon>
        <taxon>Arabidopsis</taxon>
    </lineage>
</organism>